<evidence type="ECO:0000255" key="1">
    <source>
        <dbReference type="HAMAP-Rule" id="MF_00736"/>
    </source>
</evidence>
<evidence type="ECO:0000305" key="2"/>
<organism>
    <name type="scientific">Mycolicibacterium vanbaalenii (strain DSM 7251 / JCM 13017 / BCRC 16820 / KCTC 9966 / NRRL B-24157 / PYR-1)</name>
    <name type="common">Mycobacterium vanbaalenii</name>
    <dbReference type="NCBI Taxonomy" id="350058"/>
    <lineage>
        <taxon>Bacteria</taxon>
        <taxon>Bacillati</taxon>
        <taxon>Actinomycetota</taxon>
        <taxon>Actinomycetes</taxon>
        <taxon>Mycobacteriales</taxon>
        <taxon>Mycobacteriaceae</taxon>
        <taxon>Mycolicibacterium</taxon>
    </lineage>
</organism>
<protein>
    <recommendedName>
        <fullName evidence="1">Large ribosomal subunit protein uL11</fullName>
    </recommendedName>
    <alternativeName>
        <fullName evidence="2">50S ribosomal protein L11</fullName>
    </alternativeName>
</protein>
<gene>
    <name evidence="1" type="primary">rplK</name>
    <name type="ordered locus">Mvan_1235</name>
</gene>
<name>RL11_MYCVP</name>
<proteinExistence type="inferred from homology"/>
<accession>A1T4H0</accession>
<keyword id="KW-0488">Methylation</keyword>
<keyword id="KW-0687">Ribonucleoprotein</keyword>
<keyword id="KW-0689">Ribosomal protein</keyword>
<keyword id="KW-0694">RNA-binding</keyword>
<keyword id="KW-0699">rRNA-binding</keyword>
<feature type="chain" id="PRO_1000046226" description="Large ribosomal subunit protein uL11">
    <location>
        <begin position="1"/>
        <end position="142"/>
    </location>
</feature>
<dbReference type="EMBL" id="CP000511">
    <property type="protein sequence ID" value="ABM12070.1"/>
    <property type="molecule type" value="Genomic_DNA"/>
</dbReference>
<dbReference type="RefSeq" id="WP_011778503.1">
    <property type="nucleotide sequence ID" value="NZ_JACKSD010000315.1"/>
</dbReference>
<dbReference type="SMR" id="A1T4H0"/>
<dbReference type="STRING" id="350058.Mvan_1235"/>
<dbReference type="KEGG" id="mva:Mvan_1235"/>
<dbReference type="eggNOG" id="COG0080">
    <property type="taxonomic scope" value="Bacteria"/>
</dbReference>
<dbReference type="HOGENOM" id="CLU_074237_2_1_11"/>
<dbReference type="Proteomes" id="UP000009159">
    <property type="component" value="Chromosome"/>
</dbReference>
<dbReference type="GO" id="GO:0022625">
    <property type="term" value="C:cytosolic large ribosomal subunit"/>
    <property type="evidence" value="ECO:0007669"/>
    <property type="project" value="TreeGrafter"/>
</dbReference>
<dbReference type="GO" id="GO:0070180">
    <property type="term" value="F:large ribosomal subunit rRNA binding"/>
    <property type="evidence" value="ECO:0007669"/>
    <property type="project" value="UniProtKB-UniRule"/>
</dbReference>
<dbReference type="GO" id="GO:0003735">
    <property type="term" value="F:structural constituent of ribosome"/>
    <property type="evidence" value="ECO:0007669"/>
    <property type="project" value="InterPro"/>
</dbReference>
<dbReference type="GO" id="GO:0006412">
    <property type="term" value="P:translation"/>
    <property type="evidence" value="ECO:0007669"/>
    <property type="project" value="UniProtKB-UniRule"/>
</dbReference>
<dbReference type="CDD" id="cd00349">
    <property type="entry name" value="Ribosomal_L11"/>
    <property type="match status" value="1"/>
</dbReference>
<dbReference type="FunFam" id="1.10.10.250:FF:000001">
    <property type="entry name" value="50S ribosomal protein L11"/>
    <property type="match status" value="1"/>
</dbReference>
<dbReference type="FunFam" id="3.30.1550.10:FF:000001">
    <property type="entry name" value="50S ribosomal protein L11"/>
    <property type="match status" value="1"/>
</dbReference>
<dbReference type="Gene3D" id="1.10.10.250">
    <property type="entry name" value="Ribosomal protein L11, C-terminal domain"/>
    <property type="match status" value="1"/>
</dbReference>
<dbReference type="Gene3D" id="3.30.1550.10">
    <property type="entry name" value="Ribosomal protein L11/L12, N-terminal domain"/>
    <property type="match status" value="1"/>
</dbReference>
<dbReference type="HAMAP" id="MF_00736">
    <property type="entry name" value="Ribosomal_uL11"/>
    <property type="match status" value="1"/>
</dbReference>
<dbReference type="InterPro" id="IPR000911">
    <property type="entry name" value="Ribosomal_uL11"/>
</dbReference>
<dbReference type="InterPro" id="IPR006519">
    <property type="entry name" value="Ribosomal_uL11_bac-typ"/>
</dbReference>
<dbReference type="InterPro" id="IPR020783">
    <property type="entry name" value="Ribosomal_uL11_C"/>
</dbReference>
<dbReference type="InterPro" id="IPR036769">
    <property type="entry name" value="Ribosomal_uL11_C_sf"/>
</dbReference>
<dbReference type="InterPro" id="IPR020785">
    <property type="entry name" value="Ribosomal_uL11_CS"/>
</dbReference>
<dbReference type="InterPro" id="IPR020784">
    <property type="entry name" value="Ribosomal_uL11_N"/>
</dbReference>
<dbReference type="InterPro" id="IPR036796">
    <property type="entry name" value="Ribosomal_uL11_N_sf"/>
</dbReference>
<dbReference type="NCBIfam" id="TIGR01632">
    <property type="entry name" value="L11_bact"/>
    <property type="match status" value="1"/>
</dbReference>
<dbReference type="PANTHER" id="PTHR11661">
    <property type="entry name" value="60S RIBOSOMAL PROTEIN L12"/>
    <property type="match status" value="1"/>
</dbReference>
<dbReference type="PANTHER" id="PTHR11661:SF1">
    <property type="entry name" value="LARGE RIBOSOMAL SUBUNIT PROTEIN UL11M"/>
    <property type="match status" value="1"/>
</dbReference>
<dbReference type="Pfam" id="PF00298">
    <property type="entry name" value="Ribosomal_L11"/>
    <property type="match status" value="1"/>
</dbReference>
<dbReference type="Pfam" id="PF03946">
    <property type="entry name" value="Ribosomal_L11_N"/>
    <property type="match status" value="1"/>
</dbReference>
<dbReference type="SMART" id="SM00649">
    <property type="entry name" value="RL11"/>
    <property type="match status" value="1"/>
</dbReference>
<dbReference type="SUPFAM" id="SSF54747">
    <property type="entry name" value="Ribosomal L11/L12e N-terminal domain"/>
    <property type="match status" value="1"/>
</dbReference>
<dbReference type="SUPFAM" id="SSF46906">
    <property type="entry name" value="Ribosomal protein L11, C-terminal domain"/>
    <property type="match status" value="1"/>
</dbReference>
<dbReference type="PROSITE" id="PS00359">
    <property type="entry name" value="RIBOSOMAL_L11"/>
    <property type="match status" value="1"/>
</dbReference>
<comment type="function">
    <text evidence="1">Forms part of the ribosomal stalk which helps the ribosome interact with GTP-bound translation factors.</text>
</comment>
<comment type="subunit">
    <text evidence="1">Part of the ribosomal stalk of the 50S ribosomal subunit. Interacts with L10 and the large rRNA to form the base of the stalk. L10 forms an elongated spine to which L12 dimers bind in a sequential fashion forming a multimeric L10(L12)X complex.</text>
</comment>
<comment type="PTM">
    <text evidence="1">One or more lysine residues are methylated.</text>
</comment>
<comment type="similarity">
    <text evidence="1">Belongs to the universal ribosomal protein uL11 family.</text>
</comment>
<reference key="1">
    <citation type="submission" date="2006-12" db="EMBL/GenBank/DDBJ databases">
        <title>Complete sequence of Mycobacterium vanbaalenii PYR-1.</title>
        <authorList>
            <consortium name="US DOE Joint Genome Institute"/>
            <person name="Copeland A."/>
            <person name="Lucas S."/>
            <person name="Lapidus A."/>
            <person name="Barry K."/>
            <person name="Detter J.C."/>
            <person name="Glavina del Rio T."/>
            <person name="Hammon N."/>
            <person name="Israni S."/>
            <person name="Dalin E."/>
            <person name="Tice H."/>
            <person name="Pitluck S."/>
            <person name="Singan V."/>
            <person name="Schmutz J."/>
            <person name="Larimer F."/>
            <person name="Land M."/>
            <person name="Hauser L."/>
            <person name="Kyrpides N."/>
            <person name="Anderson I.J."/>
            <person name="Miller C."/>
            <person name="Richardson P."/>
        </authorList>
    </citation>
    <scope>NUCLEOTIDE SEQUENCE [LARGE SCALE GENOMIC DNA]</scope>
    <source>
        <strain>DSM 7251 / JCM 13017 / BCRC 16820 / KCTC 9966 / NRRL B-24157 / PYR-1</strain>
    </source>
</reference>
<sequence>MPPKKKVVGLIKLQIQAGQANPAPPVGPALGQHGVNIMEFCKAYNAATEAQRGNVIPVEITVYEDRSFTFALKTPPAAKLLLKAAGVPKGSGEPHKTKVAKVTWDQVREIAETKKEDLNANDIDAAAKIIAGTARSMGITVE</sequence>